<gene>
    <name evidence="1" type="primary">fusA</name>
    <name type="ordered locus">GbCGDNIH1_1339</name>
</gene>
<evidence type="ECO:0000255" key="1">
    <source>
        <dbReference type="HAMAP-Rule" id="MF_00054"/>
    </source>
</evidence>
<comment type="function">
    <text evidence="1">Catalyzes the GTP-dependent ribosomal translocation step during translation elongation. During this step, the ribosome changes from the pre-translocational (PRE) to the post-translocational (POST) state as the newly formed A-site-bound peptidyl-tRNA and P-site-bound deacylated tRNA move to the P and E sites, respectively. Catalyzes the coordinated movement of the two tRNA molecules, the mRNA and conformational changes in the ribosome.</text>
</comment>
<comment type="subcellular location">
    <subcellularLocation>
        <location evidence="1">Cytoplasm</location>
    </subcellularLocation>
</comment>
<comment type="similarity">
    <text evidence="1">Belongs to the TRAFAC class translation factor GTPase superfamily. Classic translation factor GTPase family. EF-G/EF-2 subfamily.</text>
</comment>
<proteinExistence type="inferred from homology"/>
<dbReference type="EMBL" id="CP000394">
    <property type="protein sequence ID" value="ABI62237.1"/>
    <property type="molecule type" value="Genomic_DNA"/>
</dbReference>
<dbReference type="RefSeq" id="WP_011632046.1">
    <property type="nucleotide sequence ID" value="NC_008343.2"/>
</dbReference>
<dbReference type="SMR" id="Q0BSG5"/>
<dbReference type="STRING" id="391165.GbCGDNIH1_1339"/>
<dbReference type="KEGG" id="gbe:GbCGDNIH1_1339"/>
<dbReference type="eggNOG" id="COG0480">
    <property type="taxonomic scope" value="Bacteria"/>
</dbReference>
<dbReference type="HOGENOM" id="CLU_002794_4_1_5"/>
<dbReference type="OrthoDB" id="9802948at2"/>
<dbReference type="Proteomes" id="UP000001963">
    <property type="component" value="Chromosome"/>
</dbReference>
<dbReference type="GO" id="GO:0005737">
    <property type="term" value="C:cytoplasm"/>
    <property type="evidence" value="ECO:0007669"/>
    <property type="project" value="UniProtKB-SubCell"/>
</dbReference>
<dbReference type="GO" id="GO:0005525">
    <property type="term" value="F:GTP binding"/>
    <property type="evidence" value="ECO:0007669"/>
    <property type="project" value="UniProtKB-UniRule"/>
</dbReference>
<dbReference type="GO" id="GO:0003924">
    <property type="term" value="F:GTPase activity"/>
    <property type="evidence" value="ECO:0007669"/>
    <property type="project" value="InterPro"/>
</dbReference>
<dbReference type="GO" id="GO:0097216">
    <property type="term" value="F:guanosine tetraphosphate binding"/>
    <property type="evidence" value="ECO:0007669"/>
    <property type="project" value="UniProtKB-ARBA"/>
</dbReference>
<dbReference type="GO" id="GO:0003746">
    <property type="term" value="F:translation elongation factor activity"/>
    <property type="evidence" value="ECO:0007669"/>
    <property type="project" value="UniProtKB-UniRule"/>
</dbReference>
<dbReference type="GO" id="GO:0032790">
    <property type="term" value="P:ribosome disassembly"/>
    <property type="evidence" value="ECO:0007669"/>
    <property type="project" value="TreeGrafter"/>
</dbReference>
<dbReference type="CDD" id="cd01886">
    <property type="entry name" value="EF-G"/>
    <property type="match status" value="1"/>
</dbReference>
<dbReference type="CDD" id="cd16262">
    <property type="entry name" value="EFG_III"/>
    <property type="match status" value="1"/>
</dbReference>
<dbReference type="CDD" id="cd01434">
    <property type="entry name" value="EFG_mtEFG1_IV"/>
    <property type="match status" value="1"/>
</dbReference>
<dbReference type="CDD" id="cd03713">
    <property type="entry name" value="EFG_mtEFG_C"/>
    <property type="match status" value="1"/>
</dbReference>
<dbReference type="CDD" id="cd04088">
    <property type="entry name" value="EFG_mtEFG_II"/>
    <property type="match status" value="1"/>
</dbReference>
<dbReference type="FunFam" id="2.40.30.10:FF:000006">
    <property type="entry name" value="Elongation factor G"/>
    <property type="match status" value="1"/>
</dbReference>
<dbReference type="FunFam" id="3.30.230.10:FF:000003">
    <property type="entry name" value="Elongation factor G"/>
    <property type="match status" value="1"/>
</dbReference>
<dbReference type="FunFam" id="3.30.70.240:FF:000001">
    <property type="entry name" value="Elongation factor G"/>
    <property type="match status" value="1"/>
</dbReference>
<dbReference type="FunFam" id="3.30.70.870:FF:000001">
    <property type="entry name" value="Elongation factor G"/>
    <property type="match status" value="1"/>
</dbReference>
<dbReference type="FunFam" id="3.40.50.300:FF:000029">
    <property type="entry name" value="Elongation factor G"/>
    <property type="match status" value="1"/>
</dbReference>
<dbReference type="Gene3D" id="3.30.230.10">
    <property type="match status" value="1"/>
</dbReference>
<dbReference type="Gene3D" id="3.30.70.240">
    <property type="match status" value="1"/>
</dbReference>
<dbReference type="Gene3D" id="3.30.70.870">
    <property type="entry name" value="Elongation Factor G (Translational Gtpase), domain 3"/>
    <property type="match status" value="1"/>
</dbReference>
<dbReference type="Gene3D" id="3.40.50.300">
    <property type="entry name" value="P-loop containing nucleotide triphosphate hydrolases"/>
    <property type="match status" value="1"/>
</dbReference>
<dbReference type="Gene3D" id="2.40.30.10">
    <property type="entry name" value="Translation factors"/>
    <property type="match status" value="1"/>
</dbReference>
<dbReference type="HAMAP" id="MF_00054_B">
    <property type="entry name" value="EF_G_EF_2_B"/>
    <property type="match status" value="1"/>
</dbReference>
<dbReference type="InterPro" id="IPR041095">
    <property type="entry name" value="EFG_II"/>
</dbReference>
<dbReference type="InterPro" id="IPR009022">
    <property type="entry name" value="EFG_III"/>
</dbReference>
<dbReference type="InterPro" id="IPR035647">
    <property type="entry name" value="EFG_III/V"/>
</dbReference>
<dbReference type="InterPro" id="IPR047872">
    <property type="entry name" value="EFG_IV"/>
</dbReference>
<dbReference type="InterPro" id="IPR035649">
    <property type="entry name" value="EFG_V"/>
</dbReference>
<dbReference type="InterPro" id="IPR000640">
    <property type="entry name" value="EFG_V-like"/>
</dbReference>
<dbReference type="InterPro" id="IPR004161">
    <property type="entry name" value="EFTu-like_2"/>
</dbReference>
<dbReference type="InterPro" id="IPR031157">
    <property type="entry name" value="G_TR_CS"/>
</dbReference>
<dbReference type="InterPro" id="IPR027417">
    <property type="entry name" value="P-loop_NTPase"/>
</dbReference>
<dbReference type="InterPro" id="IPR020568">
    <property type="entry name" value="Ribosomal_Su5_D2-typ_SF"/>
</dbReference>
<dbReference type="InterPro" id="IPR014721">
    <property type="entry name" value="Ribsml_uS5_D2-typ_fold_subgr"/>
</dbReference>
<dbReference type="InterPro" id="IPR005225">
    <property type="entry name" value="Small_GTP-bd"/>
</dbReference>
<dbReference type="InterPro" id="IPR000795">
    <property type="entry name" value="T_Tr_GTP-bd_dom"/>
</dbReference>
<dbReference type="InterPro" id="IPR009000">
    <property type="entry name" value="Transl_B-barrel_sf"/>
</dbReference>
<dbReference type="InterPro" id="IPR004540">
    <property type="entry name" value="Transl_elong_EFG/EF2"/>
</dbReference>
<dbReference type="InterPro" id="IPR005517">
    <property type="entry name" value="Transl_elong_EFG/EF2_IV"/>
</dbReference>
<dbReference type="NCBIfam" id="TIGR00484">
    <property type="entry name" value="EF-G"/>
    <property type="match status" value="1"/>
</dbReference>
<dbReference type="NCBIfam" id="NF009381">
    <property type="entry name" value="PRK12740.1-5"/>
    <property type="match status" value="1"/>
</dbReference>
<dbReference type="NCBIfam" id="TIGR00231">
    <property type="entry name" value="small_GTP"/>
    <property type="match status" value="1"/>
</dbReference>
<dbReference type="PANTHER" id="PTHR43261:SF1">
    <property type="entry name" value="RIBOSOME-RELEASING FACTOR 2, MITOCHONDRIAL"/>
    <property type="match status" value="1"/>
</dbReference>
<dbReference type="PANTHER" id="PTHR43261">
    <property type="entry name" value="TRANSLATION ELONGATION FACTOR G-RELATED"/>
    <property type="match status" value="1"/>
</dbReference>
<dbReference type="Pfam" id="PF00679">
    <property type="entry name" value="EFG_C"/>
    <property type="match status" value="1"/>
</dbReference>
<dbReference type="Pfam" id="PF14492">
    <property type="entry name" value="EFG_III"/>
    <property type="match status" value="1"/>
</dbReference>
<dbReference type="Pfam" id="PF03764">
    <property type="entry name" value="EFG_IV"/>
    <property type="match status" value="1"/>
</dbReference>
<dbReference type="Pfam" id="PF00009">
    <property type="entry name" value="GTP_EFTU"/>
    <property type="match status" value="1"/>
</dbReference>
<dbReference type="Pfam" id="PF03144">
    <property type="entry name" value="GTP_EFTU_D2"/>
    <property type="match status" value="1"/>
</dbReference>
<dbReference type="PRINTS" id="PR00315">
    <property type="entry name" value="ELONGATNFCT"/>
</dbReference>
<dbReference type="SMART" id="SM00838">
    <property type="entry name" value="EFG_C"/>
    <property type="match status" value="1"/>
</dbReference>
<dbReference type="SMART" id="SM00889">
    <property type="entry name" value="EFG_IV"/>
    <property type="match status" value="1"/>
</dbReference>
<dbReference type="SUPFAM" id="SSF54980">
    <property type="entry name" value="EF-G C-terminal domain-like"/>
    <property type="match status" value="2"/>
</dbReference>
<dbReference type="SUPFAM" id="SSF52540">
    <property type="entry name" value="P-loop containing nucleoside triphosphate hydrolases"/>
    <property type="match status" value="1"/>
</dbReference>
<dbReference type="SUPFAM" id="SSF54211">
    <property type="entry name" value="Ribosomal protein S5 domain 2-like"/>
    <property type="match status" value="1"/>
</dbReference>
<dbReference type="SUPFAM" id="SSF50447">
    <property type="entry name" value="Translation proteins"/>
    <property type="match status" value="1"/>
</dbReference>
<dbReference type="PROSITE" id="PS00301">
    <property type="entry name" value="G_TR_1"/>
    <property type="match status" value="1"/>
</dbReference>
<dbReference type="PROSITE" id="PS51722">
    <property type="entry name" value="G_TR_2"/>
    <property type="match status" value="1"/>
</dbReference>
<organism>
    <name type="scientific">Granulibacter bethesdensis (strain ATCC BAA-1260 / CGDNIH1)</name>
    <dbReference type="NCBI Taxonomy" id="391165"/>
    <lineage>
        <taxon>Bacteria</taxon>
        <taxon>Pseudomonadati</taxon>
        <taxon>Pseudomonadota</taxon>
        <taxon>Alphaproteobacteria</taxon>
        <taxon>Acetobacterales</taxon>
        <taxon>Acetobacteraceae</taxon>
        <taxon>Granulibacter</taxon>
    </lineage>
</organism>
<sequence>MSTPSLEKIRNIGITAHIDAGKTTTTERILYYTGVSHKIGEVHDGNTTTDYMEQERERGITITSAAVTCEWKDHRINIIDTPGHIDFNIEVNRSLRVLDGAVFIIEGVAGVQPQSETNWRLADRYNVPRVIFINKLDRTGADFYRAFDTLKEKLDIVALPLQLPIGAEDQFLGVVDLVEMKAIIWEGGELGAKFHDEPIPAELAEKAAEYRQNLLDTALAVDDAAMEEYFEKGDVDVATLKRAIKRGTIDGTFRPVLCGTAFKNKGVQPLLDSVIDYLPAPTDLPGIKVAAEEGEDEAADRRRIPAKTDAPFSGLAFKIINDKYGTLTFVRVYSGVLRSGDSVLNTTKGHKERIGRIFQMHADKRAEIKEVFAGDIAAFVGLKDTGTGDTLASQDDPVVLERMAFPVPVIDISVEPKTKEAVEKMTLGLQKLAGEDPSLRLRTDQETGQTILSGMGELHLDIIIDRLRREYNVDCNIGAPQVAYRETISKSHTEVYTHKKQSGGSGQFAEVKIIFEPLERNEGIVFENKVVGGSVPKEYIPAVDKGIRVQAETGVLAGFPTVDFKFSLIDGKYHDVDSSALAFEIAGKACFREGMKKAGPQILEPIMDVEVTTPQDHVGDVVGDLNRRRGMIQNQESSGSTVLVRAQVPLKEMFGYISHLRSMTKGRASFTMQFHHYDPVPRNVADEIMTKSA</sequence>
<protein>
    <recommendedName>
        <fullName evidence="1">Elongation factor G</fullName>
        <shortName evidence="1">EF-G</shortName>
    </recommendedName>
</protein>
<keyword id="KW-0963">Cytoplasm</keyword>
<keyword id="KW-0251">Elongation factor</keyword>
<keyword id="KW-0342">GTP-binding</keyword>
<keyword id="KW-0547">Nucleotide-binding</keyword>
<keyword id="KW-0648">Protein biosynthesis</keyword>
<keyword id="KW-1185">Reference proteome</keyword>
<reference key="1">
    <citation type="journal article" date="2007" name="J. Bacteriol.">
        <title>Genome sequence analysis of the emerging human pathogenic acetic acid bacterium Granulibacter bethesdensis.</title>
        <authorList>
            <person name="Greenberg D.E."/>
            <person name="Porcella S.F."/>
            <person name="Zelazny A.M."/>
            <person name="Virtaneva K."/>
            <person name="Sturdevant D.E."/>
            <person name="Kupko J.J. III"/>
            <person name="Barbian K.D."/>
            <person name="Babar A."/>
            <person name="Dorward D.W."/>
            <person name="Holland S.M."/>
        </authorList>
    </citation>
    <scope>NUCLEOTIDE SEQUENCE [LARGE SCALE GENOMIC DNA]</scope>
    <source>
        <strain>ATCC BAA-1260 / CGDNIH1</strain>
    </source>
</reference>
<accession>Q0BSG5</accession>
<feature type="chain" id="PRO_0000263456" description="Elongation factor G">
    <location>
        <begin position="1"/>
        <end position="693"/>
    </location>
</feature>
<feature type="domain" description="tr-type G">
    <location>
        <begin position="7"/>
        <end position="282"/>
    </location>
</feature>
<feature type="binding site" evidence="1">
    <location>
        <begin position="16"/>
        <end position="23"/>
    </location>
    <ligand>
        <name>GTP</name>
        <dbReference type="ChEBI" id="CHEBI:37565"/>
    </ligand>
</feature>
<feature type="binding site" evidence="1">
    <location>
        <begin position="80"/>
        <end position="84"/>
    </location>
    <ligand>
        <name>GTP</name>
        <dbReference type="ChEBI" id="CHEBI:37565"/>
    </ligand>
</feature>
<feature type="binding site" evidence="1">
    <location>
        <begin position="134"/>
        <end position="137"/>
    </location>
    <ligand>
        <name>GTP</name>
        <dbReference type="ChEBI" id="CHEBI:37565"/>
    </ligand>
</feature>
<name>EFG_GRABC</name>